<evidence type="ECO:0000255" key="1">
    <source>
        <dbReference type="HAMAP-Rule" id="MF_01082"/>
    </source>
</evidence>
<protein>
    <recommendedName>
        <fullName evidence="1">tRNA pseudouridine synthase D</fullName>
        <ecNumber evidence="1">5.4.99.27</ecNumber>
    </recommendedName>
    <alternativeName>
        <fullName evidence="1">tRNA pseudouridine(13) synthase</fullName>
    </alternativeName>
    <alternativeName>
        <fullName evidence="1">tRNA pseudouridylate synthase D</fullName>
    </alternativeName>
    <alternativeName>
        <fullName evidence="1">tRNA-uridine isomerase D</fullName>
    </alternativeName>
</protein>
<keyword id="KW-0413">Isomerase</keyword>
<keyword id="KW-0819">tRNA processing</keyword>
<dbReference type="EC" id="5.4.99.27" evidence="1"/>
<dbReference type="EMBL" id="AE001439">
    <property type="protein sequence ID" value="AAD06443.1"/>
    <property type="molecule type" value="Genomic_DNA"/>
</dbReference>
<dbReference type="PIR" id="C71878">
    <property type="entry name" value="C71878"/>
</dbReference>
<dbReference type="RefSeq" id="WP_001052441.1">
    <property type="nucleotide sequence ID" value="NC_000921.1"/>
</dbReference>
<dbReference type="SMR" id="Q9ZKS5"/>
<dbReference type="KEGG" id="hpj:jhp_0860"/>
<dbReference type="PATRIC" id="fig|85963.30.peg.104"/>
<dbReference type="eggNOG" id="COG0585">
    <property type="taxonomic scope" value="Bacteria"/>
</dbReference>
<dbReference type="Proteomes" id="UP000000804">
    <property type="component" value="Chromosome"/>
</dbReference>
<dbReference type="GO" id="GO:0005829">
    <property type="term" value="C:cytosol"/>
    <property type="evidence" value="ECO:0007669"/>
    <property type="project" value="TreeGrafter"/>
</dbReference>
<dbReference type="GO" id="GO:0003723">
    <property type="term" value="F:RNA binding"/>
    <property type="evidence" value="ECO:0007669"/>
    <property type="project" value="InterPro"/>
</dbReference>
<dbReference type="GO" id="GO:0160150">
    <property type="term" value="F:tRNA pseudouridine(13) synthase activity"/>
    <property type="evidence" value="ECO:0007669"/>
    <property type="project" value="UniProtKB-EC"/>
</dbReference>
<dbReference type="GO" id="GO:0031119">
    <property type="term" value="P:tRNA pseudouridine synthesis"/>
    <property type="evidence" value="ECO:0007669"/>
    <property type="project" value="UniProtKB-UniRule"/>
</dbReference>
<dbReference type="CDD" id="cd02575">
    <property type="entry name" value="PseudoU_synth_EcTruD"/>
    <property type="match status" value="1"/>
</dbReference>
<dbReference type="FunFam" id="3.30.2350.20:FF:000008">
    <property type="entry name" value="tRNA pseudouridine synthase D"/>
    <property type="match status" value="1"/>
</dbReference>
<dbReference type="Gene3D" id="3.30.2350.20">
    <property type="entry name" value="TruD, catalytic domain"/>
    <property type="match status" value="1"/>
</dbReference>
<dbReference type="HAMAP" id="MF_01082">
    <property type="entry name" value="TruD"/>
    <property type="match status" value="1"/>
</dbReference>
<dbReference type="InterPro" id="IPR020103">
    <property type="entry name" value="PsdUridine_synth_cat_dom_sf"/>
</dbReference>
<dbReference type="InterPro" id="IPR001656">
    <property type="entry name" value="PsdUridine_synth_TruD"/>
</dbReference>
<dbReference type="InterPro" id="IPR020119">
    <property type="entry name" value="PsdUridine_synth_TruD_CS"/>
</dbReference>
<dbReference type="InterPro" id="IPR011760">
    <property type="entry name" value="PsdUridine_synth_TruD_insert"/>
</dbReference>
<dbReference type="InterPro" id="IPR042214">
    <property type="entry name" value="TruD_catalytic"/>
</dbReference>
<dbReference type="InterPro" id="IPR050170">
    <property type="entry name" value="TruD_pseudoU_synthase"/>
</dbReference>
<dbReference type="NCBIfam" id="NF002154">
    <property type="entry name" value="PRK00984.1-3"/>
    <property type="match status" value="1"/>
</dbReference>
<dbReference type="NCBIfam" id="TIGR00094">
    <property type="entry name" value="tRNA_TruD_broad"/>
    <property type="match status" value="1"/>
</dbReference>
<dbReference type="PANTHER" id="PTHR47811">
    <property type="entry name" value="TRNA PSEUDOURIDINE SYNTHASE D"/>
    <property type="match status" value="1"/>
</dbReference>
<dbReference type="PANTHER" id="PTHR47811:SF1">
    <property type="entry name" value="TRNA PSEUDOURIDINE SYNTHASE D"/>
    <property type="match status" value="1"/>
</dbReference>
<dbReference type="Pfam" id="PF01142">
    <property type="entry name" value="TruD"/>
    <property type="match status" value="2"/>
</dbReference>
<dbReference type="PIRSF" id="PIRSF037016">
    <property type="entry name" value="Pseudouridin_synth_euk_prd"/>
    <property type="match status" value="1"/>
</dbReference>
<dbReference type="SUPFAM" id="SSF55120">
    <property type="entry name" value="Pseudouridine synthase"/>
    <property type="match status" value="1"/>
</dbReference>
<dbReference type="PROSITE" id="PS50984">
    <property type="entry name" value="TRUD"/>
    <property type="match status" value="1"/>
</dbReference>
<dbReference type="PROSITE" id="PS01268">
    <property type="entry name" value="UPF0024"/>
    <property type="match status" value="1"/>
</dbReference>
<organism>
    <name type="scientific">Helicobacter pylori (strain J99 / ATCC 700824)</name>
    <name type="common">Campylobacter pylori J99</name>
    <dbReference type="NCBI Taxonomy" id="85963"/>
    <lineage>
        <taxon>Bacteria</taxon>
        <taxon>Pseudomonadati</taxon>
        <taxon>Campylobacterota</taxon>
        <taxon>Epsilonproteobacteria</taxon>
        <taxon>Campylobacterales</taxon>
        <taxon>Helicobacteraceae</taxon>
        <taxon>Helicobacter</taxon>
    </lineage>
</organism>
<reference key="1">
    <citation type="journal article" date="1999" name="Nature">
        <title>Genomic sequence comparison of two unrelated isolates of the human gastric pathogen Helicobacter pylori.</title>
        <authorList>
            <person name="Alm R.A."/>
            <person name="Ling L.-S.L."/>
            <person name="Moir D.T."/>
            <person name="King B.L."/>
            <person name="Brown E.D."/>
            <person name="Doig P.C."/>
            <person name="Smith D.R."/>
            <person name="Noonan B."/>
            <person name="Guild B.C."/>
            <person name="deJonge B.L."/>
            <person name="Carmel G."/>
            <person name="Tummino P.J."/>
            <person name="Caruso A."/>
            <person name="Uria-Nickelsen M."/>
            <person name="Mills D.M."/>
            <person name="Ives C."/>
            <person name="Gibson R."/>
            <person name="Merberg D."/>
            <person name="Mills S.D."/>
            <person name="Jiang Q."/>
            <person name="Taylor D.E."/>
            <person name="Vovis G.F."/>
            <person name="Trust T.J."/>
        </authorList>
    </citation>
    <scope>NUCLEOTIDE SEQUENCE [LARGE SCALE GENOMIC DNA]</scope>
    <source>
        <strain>J99 / ATCC 700824</strain>
    </source>
</reference>
<feature type="chain" id="PRO_0000152503" description="tRNA pseudouridine synthase D">
    <location>
        <begin position="1"/>
        <end position="381"/>
    </location>
</feature>
<feature type="domain" description="TRUD" evidence="1">
    <location>
        <begin position="160"/>
        <end position="335"/>
    </location>
</feature>
<feature type="active site" description="Nucleophile" evidence="1">
    <location>
        <position position="81"/>
    </location>
</feature>
<comment type="function">
    <text evidence="1">Responsible for synthesis of pseudouridine from uracil-13 in transfer RNAs.</text>
</comment>
<comment type="catalytic activity">
    <reaction evidence="1">
        <text>uridine(13) in tRNA = pseudouridine(13) in tRNA</text>
        <dbReference type="Rhea" id="RHEA:42540"/>
        <dbReference type="Rhea" id="RHEA-COMP:10105"/>
        <dbReference type="Rhea" id="RHEA-COMP:10106"/>
        <dbReference type="ChEBI" id="CHEBI:65314"/>
        <dbReference type="ChEBI" id="CHEBI:65315"/>
        <dbReference type="EC" id="5.4.99.27"/>
    </reaction>
</comment>
<comment type="similarity">
    <text evidence="1">Belongs to the pseudouridine synthase TruD family.</text>
</comment>
<proteinExistence type="inferred from homology"/>
<sequence>MNLNFMPLLHAYNHVSIDFHFNSSARDFCVHEVPLYEFSNTGEHAVIQVRKSGLSTLEMLQIFSQILGVKIAELGYAGLKDKNALTTQFISLPKKYAPLLEKNTSNFQERNLKILSLNYHHNKIKLGHLKGNRFFMRFKKMTPLNAQKTEQVLEQIAQFGMPNYFGSQRFGKFNDNHKEGLKILQNETKFAHQKLNAFLISSYQSYLFNSLLSKRLEISKIISAFSVKESLEFFKQKNLSVHSNALKALKNQAHPFKILEGDVMRHYPYGKFFDALELEKESERFLNKEAVPTGLLDGKKALYAKNLSLEIEKGFQHNLLSGHAKTLGSRRFFWVFVENITSQYIKEKAQFELEFYLPKGSYASALLKEIKHEKGENNDEF</sequence>
<name>TRUD_HELPJ</name>
<accession>Q9ZKS5</accession>
<gene>
    <name evidence="1" type="primary">truD</name>
    <name type="ordered locus">jhp_0860</name>
</gene>